<comment type="function">
    <text evidence="1">3'-to-5' exoribonuclease specific for small oligoribonucleotides.</text>
</comment>
<comment type="subcellular location">
    <subcellularLocation>
        <location evidence="1">Cytoplasm</location>
    </subcellularLocation>
</comment>
<comment type="similarity">
    <text evidence="1">Belongs to the oligoribonuclease family.</text>
</comment>
<accession>Q4QJM8</accession>
<evidence type="ECO:0000255" key="1">
    <source>
        <dbReference type="HAMAP-Rule" id="MF_00045"/>
    </source>
</evidence>
<name>ORN_HAEI8</name>
<protein>
    <recommendedName>
        <fullName evidence="1">Oligoribonuclease</fullName>
        <ecNumber evidence="1">3.1.15.-</ecNumber>
    </recommendedName>
</protein>
<feature type="chain" id="PRO_0000111040" description="Oligoribonuclease">
    <location>
        <begin position="1"/>
        <end position="182"/>
    </location>
</feature>
<feature type="domain" description="Exonuclease" evidence="1">
    <location>
        <begin position="8"/>
        <end position="171"/>
    </location>
</feature>
<feature type="active site" evidence="1">
    <location>
        <position position="129"/>
    </location>
</feature>
<keyword id="KW-0963">Cytoplasm</keyword>
<keyword id="KW-0269">Exonuclease</keyword>
<keyword id="KW-0378">Hydrolase</keyword>
<keyword id="KW-0540">Nuclease</keyword>
<reference key="1">
    <citation type="journal article" date="2005" name="J. Bacteriol.">
        <title>Genomic sequence of an otitis media isolate of nontypeable Haemophilus influenzae: comparative study with H. influenzae serotype d, strain KW20.</title>
        <authorList>
            <person name="Harrison A."/>
            <person name="Dyer D.W."/>
            <person name="Gillaspy A."/>
            <person name="Ray W.C."/>
            <person name="Mungur R."/>
            <person name="Carson M.B."/>
            <person name="Zhong H."/>
            <person name="Gipson J."/>
            <person name="Gipson M."/>
            <person name="Johnson L.S."/>
            <person name="Lewis L."/>
            <person name="Bakaletz L.O."/>
            <person name="Munson R.S. Jr."/>
        </authorList>
    </citation>
    <scope>NUCLEOTIDE SEQUENCE [LARGE SCALE GENOMIC DNA]</scope>
    <source>
        <strain>86-028NP</strain>
    </source>
</reference>
<gene>
    <name evidence="1" type="primary">orn</name>
    <name type="ordered locus">NTHI2024</name>
</gene>
<proteinExistence type="inferred from homology"/>
<organism>
    <name type="scientific">Haemophilus influenzae (strain 86-028NP)</name>
    <dbReference type="NCBI Taxonomy" id="281310"/>
    <lineage>
        <taxon>Bacteria</taxon>
        <taxon>Pseudomonadati</taxon>
        <taxon>Pseudomonadota</taxon>
        <taxon>Gammaproteobacteria</taxon>
        <taxon>Pasteurellales</taxon>
        <taxon>Pasteurellaceae</taxon>
        <taxon>Haemophilus</taxon>
    </lineage>
</organism>
<sequence length="182" mass="21195">MPFDKQNLIWIDLEMTGLDPEKERIIEIATIVTDKNLNILAEGPVLAVHQSDELLNKMNDWCQKTHSENGLIERVKASKLTERAAELQTLDFLKKWVPKGASPICGNSIAQDKRFLVKYMPDLADYFHYRHLDVSTLKELAARWKPEILEGFKKENTHLALDDIRESIKELAYYREHFMKLD</sequence>
<dbReference type="EC" id="3.1.15.-" evidence="1"/>
<dbReference type="EMBL" id="CP000057">
    <property type="protein sequence ID" value="AAX88769.1"/>
    <property type="molecule type" value="Genomic_DNA"/>
</dbReference>
<dbReference type="RefSeq" id="WP_009500975.1">
    <property type="nucleotide sequence ID" value="NC_007146.2"/>
</dbReference>
<dbReference type="SMR" id="Q4QJM8"/>
<dbReference type="GeneID" id="93220724"/>
<dbReference type="KEGG" id="hit:NTHI2024"/>
<dbReference type="HOGENOM" id="CLU_064761_2_0_6"/>
<dbReference type="Proteomes" id="UP000002525">
    <property type="component" value="Chromosome"/>
</dbReference>
<dbReference type="GO" id="GO:0005737">
    <property type="term" value="C:cytoplasm"/>
    <property type="evidence" value="ECO:0007669"/>
    <property type="project" value="UniProtKB-SubCell"/>
</dbReference>
<dbReference type="GO" id="GO:0000175">
    <property type="term" value="F:3'-5'-RNA exonuclease activity"/>
    <property type="evidence" value="ECO:0007669"/>
    <property type="project" value="InterPro"/>
</dbReference>
<dbReference type="GO" id="GO:0003676">
    <property type="term" value="F:nucleic acid binding"/>
    <property type="evidence" value="ECO:0007669"/>
    <property type="project" value="InterPro"/>
</dbReference>
<dbReference type="GO" id="GO:0006259">
    <property type="term" value="P:DNA metabolic process"/>
    <property type="evidence" value="ECO:0007669"/>
    <property type="project" value="UniProtKB-ARBA"/>
</dbReference>
<dbReference type="CDD" id="cd06135">
    <property type="entry name" value="Orn"/>
    <property type="match status" value="1"/>
</dbReference>
<dbReference type="FunFam" id="3.30.420.10:FF:000003">
    <property type="entry name" value="Oligoribonuclease"/>
    <property type="match status" value="1"/>
</dbReference>
<dbReference type="Gene3D" id="3.30.420.10">
    <property type="entry name" value="Ribonuclease H-like superfamily/Ribonuclease H"/>
    <property type="match status" value="1"/>
</dbReference>
<dbReference type="HAMAP" id="MF_00045">
    <property type="entry name" value="Oligoribonuclease"/>
    <property type="match status" value="1"/>
</dbReference>
<dbReference type="InterPro" id="IPR013520">
    <property type="entry name" value="Exonuclease_RNaseT/DNA_pol3"/>
</dbReference>
<dbReference type="InterPro" id="IPR022894">
    <property type="entry name" value="Oligoribonuclease"/>
</dbReference>
<dbReference type="InterPro" id="IPR012337">
    <property type="entry name" value="RNaseH-like_sf"/>
</dbReference>
<dbReference type="InterPro" id="IPR036397">
    <property type="entry name" value="RNaseH_sf"/>
</dbReference>
<dbReference type="NCBIfam" id="NF003765">
    <property type="entry name" value="PRK05359.1"/>
    <property type="match status" value="1"/>
</dbReference>
<dbReference type="PANTHER" id="PTHR11046">
    <property type="entry name" value="OLIGORIBONUCLEASE, MITOCHONDRIAL"/>
    <property type="match status" value="1"/>
</dbReference>
<dbReference type="PANTHER" id="PTHR11046:SF0">
    <property type="entry name" value="OLIGORIBONUCLEASE, MITOCHONDRIAL"/>
    <property type="match status" value="1"/>
</dbReference>
<dbReference type="Pfam" id="PF00929">
    <property type="entry name" value="RNase_T"/>
    <property type="match status" value="1"/>
</dbReference>
<dbReference type="SMART" id="SM00479">
    <property type="entry name" value="EXOIII"/>
    <property type="match status" value="1"/>
</dbReference>
<dbReference type="SUPFAM" id="SSF53098">
    <property type="entry name" value="Ribonuclease H-like"/>
    <property type="match status" value="1"/>
</dbReference>